<keyword id="KW-0030">Aminoacyl-tRNA synthetase</keyword>
<keyword id="KW-0067">ATP-binding</keyword>
<keyword id="KW-0963">Cytoplasm</keyword>
<keyword id="KW-0436">Ligase</keyword>
<keyword id="KW-0547">Nucleotide-binding</keyword>
<keyword id="KW-0648">Protein biosynthesis</keyword>
<keyword id="KW-1185">Reference proteome</keyword>
<comment type="function">
    <text evidence="1">Catalyzes the attachment of proline to tRNA(Pro) in a two-step reaction: proline is first activated by ATP to form Pro-AMP and then transferred to the acceptor end of tRNA(Pro).</text>
</comment>
<comment type="catalytic activity">
    <reaction evidence="1">
        <text>tRNA(Pro) + L-proline + ATP = L-prolyl-tRNA(Pro) + AMP + diphosphate</text>
        <dbReference type="Rhea" id="RHEA:14305"/>
        <dbReference type="Rhea" id="RHEA-COMP:9700"/>
        <dbReference type="Rhea" id="RHEA-COMP:9702"/>
        <dbReference type="ChEBI" id="CHEBI:30616"/>
        <dbReference type="ChEBI" id="CHEBI:33019"/>
        <dbReference type="ChEBI" id="CHEBI:60039"/>
        <dbReference type="ChEBI" id="CHEBI:78442"/>
        <dbReference type="ChEBI" id="CHEBI:78532"/>
        <dbReference type="ChEBI" id="CHEBI:456215"/>
        <dbReference type="EC" id="6.1.1.15"/>
    </reaction>
</comment>
<comment type="subunit">
    <text evidence="1">Homodimer.</text>
</comment>
<comment type="subcellular location">
    <subcellularLocation>
        <location evidence="1">Cytoplasm</location>
    </subcellularLocation>
</comment>
<comment type="domain">
    <text evidence="1">Consists of three domains: the N-terminal catalytic domain, the anticodon-binding domain and the C-terminal extension.</text>
</comment>
<comment type="similarity">
    <text evidence="1">Belongs to the class-II aminoacyl-tRNA synthetase family. ProS type 3 subfamily.</text>
</comment>
<name>SYP_PYRAE</name>
<sequence length="488" mass="56450">MELIREARPHSREKLKSNLIEWFHWLLREAELYDVRYPVKGAYVWRPYGMKIRRNVENLIRKFHDETGHEEVLFPVFIPYEFFGKESQHIKGFEKEVFWVSKGGEAGERLVLRPTSETAIMPMVKLWIQDYKDLPLRVYQIVSVFRAETKMTHPMIRLREISMFKEAHTVHADKEDAERQVREAVEIYKRIFDEMCLAYLINKRPEWDKFAGAEYTIAFDTILPDGRSLQIGTVHYLGTNFTKVFEVTYLDADGTRKLAHTTSYGISERSIAAMLITHGDDGGTTLPPKLAPIQVVVIPIYYGEEEAPLVMPLVRETANRLNEAGIRVYVDERADKTPGWKFYYWELKGVPLRVEIGKRDVEKRQAVIARRDTLEKYAVSINELVDAVKQLMKSVEENLRKRAWEELKGRVVKAEDIEVAKAAIKEGKVVEIPWSGDNDCGIKIQELVGADALGIPLDADASVGGYDLRDLACKERRAELWLRLSERY</sequence>
<organism>
    <name type="scientific">Pyrobaculum aerophilum (strain ATCC 51768 / DSM 7523 / JCM 9630 / CIP 104966 / NBRC 100827 / IM2)</name>
    <dbReference type="NCBI Taxonomy" id="178306"/>
    <lineage>
        <taxon>Archaea</taxon>
        <taxon>Thermoproteota</taxon>
        <taxon>Thermoprotei</taxon>
        <taxon>Thermoproteales</taxon>
        <taxon>Thermoproteaceae</taxon>
        <taxon>Pyrobaculum</taxon>
    </lineage>
</organism>
<feature type="chain" id="PRO_0000249168" description="Proline--tRNA ligase">
    <location>
        <begin position="1"/>
        <end position="488"/>
    </location>
</feature>
<reference key="1">
    <citation type="journal article" date="2002" name="Proc. Natl. Acad. Sci. U.S.A.">
        <title>Genome sequence of the hyperthermophilic crenarchaeon Pyrobaculum aerophilum.</title>
        <authorList>
            <person name="Fitz-Gibbon S.T."/>
            <person name="Ladner H."/>
            <person name="Kim U.-J."/>
            <person name="Stetter K.O."/>
            <person name="Simon M.I."/>
            <person name="Miller J.H."/>
        </authorList>
    </citation>
    <scope>NUCLEOTIDE SEQUENCE [LARGE SCALE GENOMIC DNA]</scope>
    <source>
        <strain>ATCC 51768 / DSM 7523 / JCM 9630 / CIP 104966 / NBRC 100827 / IM2</strain>
    </source>
</reference>
<gene>
    <name evidence="1" type="primary">proS</name>
    <name type="ordered locus">PAE2165</name>
</gene>
<dbReference type="EC" id="6.1.1.15" evidence="1"/>
<dbReference type="EMBL" id="AE009441">
    <property type="protein sequence ID" value="AAL63997.1"/>
    <property type="molecule type" value="Genomic_DNA"/>
</dbReference>
<dbReference type="RefSeq" id="WP_011008465.1">
    <property type="nucleotide sequence ID" value="NC_003364.1"/>
</dbReference>
<dbReference type="SMR" id="Q8ZVQ9"/>
<dbReference type="FunCoup" id="Q8ZVQ9">
    <property type="interactions" value="125"/>
</dbReference>
<dbReference type="STRING" id="178306.PAE2165"/>
<dbReference type="EnsemblBacteria" id="AAL63997">
    <property type="protein sequence ID" value="AAL63997"/>
    <property type="gene ID" value="PAE2165"/>
</dbReference>
<dbReference type="GeneID" id="1464330"/>
<dbReference type="KEGG" id="pai:PAE2165"/>
<dbReference type="PATRIC" id="fig|178306.9.peg.1603"/>
<dbReference type="eggNOG" id="arCOG00402">
    <property type="taxonomic scope" value="Archaea"/>
</dbReference>
<dbReference type="HOGENOM" id="CLU_001882_4_2_2"/>
<dbReference type="InParanoid" id="Q8ZVQ9"/>
<dbReference type="Proteomes" id="UP000002439">
    <property type="component" value="Chromosome"/>
</dbReference>
<dbReference type="GO" id="GO:0005737">
    <property type="term" value="C:cytoplasm"/>
    <property type="evidence" value="ECO:0007669"/>
    <property type="project" value="UniProtKB-SubCell"/>
</dbReference>
<dbReference type="GO" id="GO:0005524">
    <property type="term" value="F:ATP binding"/>
    <property type="evidence" value="ECO:0007669"/>
    <property type="project" value="UniProtKB-UniRule"/>
</dbReference>
<dbReference type="GO" id="GO:0004827">
    <property type="term" value="F:proline-tRNA ligase activity"/>
    <property type="evidence" value="ECO:0000318"/>
    <property type="project" value="GO_Central"/>
</dbReference>
<dbReference type="GO" id="GO:0006433">
    <property type="term" value="P:prolyl-tRNA aminoacylation"/>
    <property type="evidence" value="ECO:0000318"/>
    <property type="project" value="GO_Central"/>
</dbReference>
<dbReference type="CDD" id="cd00862">
    <property type="entry name" value="ProRS_anticodon_zinc"/>
    <property type="match status" value="1"/>
</dbReference>
<dbReference type="CDD" id="cd00778">
    <property type="entry name" value="ProRS_core_arch_euk"/>
    <property type="match status" value="1"/>
</dbReference>
<dbReference type="FunFam" id="3.40.50.800:FF:000005">
    <property type="entry name" value="bifunctional glutamate/proline--tRNA ligase"/>
    <property type="match status" value="1"/>
</dbReference>
<dbReference type="FunFam" id="3.30.930.10:FF:000037">
    <property type="entry name" value="Proline--tRNA ligase"/>
    <property type="match status" value="1"/>
</dbReference>
<dbReference type="Gene3D" id="3.40.50.800">
    <property type="entry name" value="Anticodon-binding domain"/>
    <property type="match status" value="1"/>
</dbReference>
<dbReference type="Gene3D" id="3.30.930.10">
    <property type="entry name" value="Bira Bifunctional Protein, Domain 2"/>
    <property type="match status" value="1"/>
</dbReference>
<dbReference type="Gene3D" id="3.30.110.30">
    <property type="entry name" value="C-terminal domain of ProRS"/>
    <property type="match status" value="1"/>
</dbReference>
<dbReference type="HAMAP" id="MF_01571">
    <property type="entry name" value="Pro_tRNA_synth_type3"/>
    <property type="match status" value="1"/>
</dbReference>
<dbReference type="InterPro" id="IPR002314">
    <property type="entry name" value="aa-tRNA-synt_IIb"/>
</dbReference>
<dbReference type="InterPro" id="IPR006195">
    <property type="entry name" value="aa-tRNA-synth_II"/>
</dbReference>
<dbReference type="InterPro" id="IPR045864">
    <property type="entry name" value="aa-tRNA-synth_II/BPL/LPL"/>
</dbReference>
<dbReference type="InterPro" id="IPR004154">
    <property type="entry name" value="Anticodon-bd"/>
</dbReference>
<dbReference type="InterPro" id="IPR036621">
    <property type="entry name" value="Anticodon-bd_dom_sf"/>
</dbReference>
<dbReference type="InterPro" id="IPR002316">
    <property type="entry name" value="Pro-tRNA-ligase_IIa"/>
</dbReference>
<dbReference type="InterPro" id="IPR004499">
    <property type="entry name" value="Pro-tRNA-ligase_IIa_arc-type"/>
</dbReference>
<dbReference type="InterPro" id="IPR016061">
    <property type="entry name" value="Pro-tRNA_ligase_II_C"/>
</dbReference>
<dbReference type="InterPro" id="IPR017449">
    <property type="entry name" value="Pro-tRNA_synth_II"/>
</dbReference>
<dbReference type="InterPro" id="IPR033721">
    <property type="entry name" value="ProRS_core_arch_euk"/>
</dbReference>
<dbReference type="NCBIfam" id="TIGR00408">
    <property type="entry name" value="proS_fam_I"/>
    <property type="match status" value="1"/>
</dbReference>
<dbReference type="PANTHER" id="PTHR43382:SF2">
    <property type="entry name" value="BIFUNCTIONAL GLUTAMATE_PROLINE--TRNA LIGASE"/>
    <property type="match status" value="1"/>
</dbReference>
<dbReference type="PANTHER" id="PTHR43382">
    <property type="entry name" value="PROLYL-TRNA SYNTHETASE"/>
    <property type="match status" value="1"/>
</dbReference>
<dbReference type="Pfam" id="PF03129">
    <property type="entry name" value="HGTP_anticodon"/>
    <property type="match status" value="1"/>
</dbReference>
<dbReference type="Pfam" id="PF09180">
    <property type="entry name" value="ProRS-C_1"/>
    <property type="match status" value="1"/>
</dbReference>
<dbReference type="Pfam" id="PF00587">
    <property type="entry name" value="tRNA-synt_2b"/>
    <property type="match status" value="1"/>
</dbReference>
<dbReference type="PRINTS" id="PR01046">
    <property type="entry name" value="TRNASYNTHPRO"/>
</dbReference>
<dbReference type="SMART" id="SM00946">
    <property type="entry name" value="ProRS-C_1"/>
    <property type="match status" value="1"/>
</dbReference>
<dbReference type="SUPFAM" id="SSF64586">
    <property type="entry name" value="C-terminal domain of ProRS"/>
    <property type="match status" value="1"/>
</dbReference>
<dbReference type="SUPFAM" id="SSF52954">
    <property type="entry name" value="Class II aaRS ABD-related"/>
    <property type="match status" value="1"/>
</dbReference>
<dbReference type="SUPFAM" id="SSF55681">
    <property type="entry name" value="Class II aaRS and biotin synthetases"/>
    <property type="match status" value="1"/>
</dbReference>
<dbReference type="PROSITE" id="PS50862">
    <property type="entry name" value="AA_TRNA_LIGASE_II"/>
    <property type="match status" value="1"/>
</dbReference>
<accession>Q8ZVQ9</accession>
<protein>
    <recommendedName>
        <fullName evidence="1">Proline--tRNA ligase</fullName>
        <ecNumber evidence="1">6.1.1.15</ecNumber>
    </recommendedName>
    <alternativeName>
        <fullName evidence="1">Prolyl-tRNA synthetase</fullName>
        <shortName evidence="1">ProRS</shortName>
    </alternativeName>
</protein>
<proteinExistence type="inferred from homology"/>
<evidence type="ECO:0000255" key="1">
    <source>
        <dbReference type="HAMAP-Rule" id="MF_01571"/>
    </source>
</evidence>